<proteinExistence type="evidence at transcript level"/>
<organism>
    <name type="scientific">Rattus norvegicus</name>
    <name type="common">Rat</name>
    <dbReference type="NCBI Taxonomy" id="10116"/>
    <lineage>
        <taxon>Eukaryota</taxon>
        <taxon>Metazoa</taxon>
        <taxon>Chordata</taxon>
        <taxon>Craniata</taxon>
        <taxon>Vertebrata</taxon>
        <taxon>Euteleostomi</taxon>
        <taxon>Mammalia</taxon>
        <taxon>Eutheria</taxon>
        <taxon>Euarchontoglires</taxon>
        <taxon>Glires</taxon>
        <taxon>Rodentia</taxon>
        <taxon>Myomorpha</taxon>
        <taxon>Muroidea</taxon>
        <taxon>Muridae</taxon>
        <taxon>Murinae</taxon>
        <taxon>Rattus</taxon>
    </lineage>
</organism>
<gene>
    <name type="primary">Fhl1</name>
</gene>
<evidence type="ECO:0000250" key="1"/>
<evidence type="ECO:0000250" key="2">
    <source>
        <dbReference type="UniProtKB" id="P97447"/>
    </source>
</evidence>
<evidence type="ECO:0000250" key="3">
    <source>
        <dbReference type="UniProtKB" id="Q13642"/>
    </source>
</evidence>
<evidence type="ECO:0000255" key="4"/>
<evidence type="ECO:0000255" key="5">
    <source>
        <dbReference type="PROSITE-ProRule" id="PRU00125"/>
    </source>
</evidence>
<dbReference type="EMBL" id="AF134773">
    <property type="protein sequence ID" value="AAD32624.1"/>
    <property type="molecule type" value="mRNA"/>
</dbReference>
<dbReference type="RefSeq" id="NP_001258128.1">
    <property type="nucleotide sequence ID" value="NM_001271199.1"/>
</dbReference>
<dbReference type="RefSeq" id="NP_001258129.1">
    <property type="nucleotide sequence ID" value="NM_001271200.1"/>
</dbReference>
<dbReference type="SMR" id="Q9WUH4"/>
<dbReference type="BioGRID" id="247233">
    <property type="interactions" value="2"/>
</dbReference>
<dbReference type="FunCoup" id="Q9WUH4">
    <property type="interactions" value="195"/>
</dbReference>
<dbReference type="IntAct" id="Q9WUH4">
    <property type="interactions" value="1"/>
</dbReference>
<dbReference type="STRING" id="10116.ENSRNOP00000072490"/>
<dbReference type="iPTMnet" id="Q9WUH4"/>
<dbReference type="PhosphoSitePlus" id="Q9WUH4"/>
<dbReference type="PaxDb" id="10116-ENSRNOP00000049677"/>
<dbReference type="Ensembl" id="ENSRNOT00000084594.2">
    <property type="protein sequence ID" value="ENSRNOP00000074052.1"/>
    <property type="gene ID" value="ENSRNOG00000000875.9"/>
</dbReference>
<dbReference type="GeneID" id="25177"/>
<dbReference type="KEGG" id="rno:25177"/>
<dbReference type="AGR" id="RGD:2615"/>
<dbReference type="CTD" id="2273"/>
<dbReference type="RGD" id="2615">
    <property type="gene designation" value="Fhl1"/>
</dbReference>
<dbReference type="eggNOG" id="KOG1704">
    <property type="taxonomic scope" value="Eukaryota"/>
</dbReference>
<dbReference type="GeneTree" id="ENSGT00940000154833"/>
<dbReference type="HOGENOM" id="CLU_001357_2_0_1"/>
<dbReference type="InParanoid" id="Q9WUH4"/>
<dbReference type="PhylomeDB" id="Q9WUH4"/>
<dbReference type="PRO" id="PR:Q9WUH4"/>
<dbReference type="Proteomes" id="UP000002494">
    <property type="component" value="Chromosome X"/>
</dbReference>
<dbReference type="Bgee" id="ENSRNOG00000000875">
    <property type="expression patterns" value="Expressed in esophagus and 20 other cell types or tissues"/>
</dbReference>
<dbReference type="ExpressionAtlas" id="Q9WUH4">
    <property type="expression patterns" value="baseline and differential"/>
</dbReference>
<dbReference type="GO" id="GO:0005737">
    <property type="term" value="C:cytoplasm"/>
    <property type="evidence" value="ECO:0000266"/>
    <property type="project" value="RGD"/>
</dbReference>
<dbReference type="GO" id="GO:0005634">
    <property type="term" value="C:nucleus"/>
    <property type="evidence" value="ECO:0000266"/>
    <property type="project" value="RGD"/>
</dbReference>
<dbReference type="GO" id="GO:0005886">
    <property type="term" value="C:plasma membrane"/>
    <property type="evidence" value="ECO:0000266"/>
    <property type="project" value="RGD"/>
</dbReference>
<dbReference type="GO" id="GO:0044325">
    <property type="term" value="F:transmembrane transporter binding"/>
    <property type="evidence" value="ECO:0000266"/>
    <property type="project" value="RGD"/>
</dbReference>
<dbReference type="GO" id="GO:0008270">
    <property type="term" value="F:zinc ion binding"/>
    <property type="evidence" value="ECO:0007669"/>
    <property type="project" value="UniProtKB-KW"/>
</dbReference>
<dbReference type="GO" id="GO:0030154">
    <property type="term" value="P:cell differentiation"/>
    <property type="evidence" value="ECO:0007669"/>
    <property type="project" value="UniProtKB-KW"/>
</dbReference>
<dbReference type="GO" id="GO:0007517">
    <property type="term" value="P:muscle organ development"/>
    <property type="evidence" value="ECO:0007669"/>
    <property type="project" value="InterPro"/>
</dbReference>
<dbReference type="GO" id="GO:0030308">
    <property type="term" value="P:negative regulation of cell growth"/>
    <property type="evidence" value="ECO:0000266"/>
    <property type="project" value="RGD"/>
</dbReference>
<dbReference type="GO" id="GO:2000134">
    <property type="term" value="P:negative regulation of G1/S transition of mitotic cell cycle"/>
    <property type="evidence" value="ECO:0000266"/>
    <property type="project" value="RGD"/>
</dbReference>
<dbReference type="GO" id="GO:0010972">
    <property type="term" value="P:negative regulation of G2/M transition of mitotic cell cycle"/>
    <property type="evidence" value="ECO:0000266"/>
    <property type="project" value="RGD"/>
</dbReference>
<dbReference type="GO" id="GO:0043268">
    <property type="term" value="P:positive regulation of potassium ion transport"/>
    <property type="evidence" value="ECO:0000266"/>
    <property type="project" value="RGD"/>
</dbReference>
<dbReference type="GO" id="GO:0003254">
    <property type="term" value="P:regulation of membrane depolarization"/>
    <property type="evidence" value="ECO:0000266"/>
    <property type="project" value="RGD"/>
</dbReference>
<dbReference type="CDD" id="cd09344">
    <property type="entry name" value="LIM1_FHL1"/>
    <property type="match status" value="1"/>
</dbReference>
<dbReference type="CDD" id="cd09424">
    <property type="entry name" value="LIM2_FHL1"/>
    <property type="match status" value="1"/>
</dbReference>
<dbReference type="CDD" id="cd09429">
    <property type="entry name" value="LIM3_FHL1"/>
    <property type="match status" value="1"/>
</dbReference>
<dbReference type="CDD" id="cd09348">
    <property type="entry name" value="LIM4_FHL1"/>
    <property type="match status" value="1"/>
</dbReference>
<dbReference type="FunFam" id="2.10.110.10:FF:000013">
    <property type="entry name" value="Four and a half LIM domains 1"/>
    <property type="match status" value="1"/>
</dbReference>
<dbReference type="FunFam" id="2.10.110.10:FF:000052">
    <property type="entry name" value="Four and a half LIM domains 1"/>
    <property type="match status" value="1"/>
</dbReference>
<dbReference type="FunFam" id="2.10.110.10:FF:000050">
    <property type="entry name" value="Four and a half LIM domains protein 1"/>
    <property type="match status" value="1"/>
</dbReference>
<dbReference type="FunFam" id="2.10.110.10:FF:000072">
    <property type="entry name" value="Four and a half LIM domains protein 1"/>
    <property type="match status" value="1"/>
</dbReference>
<dbReference type="Gene3D" id="2.10.110.10">
    <property type="entry name" value="Cysteine Rich Protein"/>
    <property type="match status" value="4"/>
</dbReference>
<dbReference type="InterPro" id="IPR042997">
    <property type="entry name" value="Fhl1"/>
</dbReference>
<dbReference type="InterPro" id="IPR056807">
    <property type="entry name" value="LIM_FHL1/2/3/5_N"/>
</dbReference>
<dbReference type="InterPro" id="IPR001781">
    <property type="entry name" value="Znf_LIM"/>
</dbReference>
<dbReference type="PANTHER" id="PTHR47029">
    <property type="entry name" value="FOUR AND A HALF LIM DOMAINS PROTEIN 1"/>
    <property type="match status" value="1"/>
</dbReference>
<dbReference type="PANTHER" id="PTHR47029:SF2">
    <property type="entry name" value="FOUR AND A HALF LIM DOMAINS PROTEIN 1"/>
    <property type="match status" value="1"/>
</dbReference>
<dbReference type="Pfam" id="PF00412">
    <property type="entry name" value="LIM"/>
    <property type="match status" value="4"/>
</dbReference>
<dbReference type="Pfam" id="PF25076">
    <property type="entry name" value="LIM_FHL2-3_N"/>
    <property type="match status" value="1"/>
</dbReference>
<dbReference type="SMART" id="SM00132">
    <property type="entry name" value="LIM"/>
    <property type="match status" value="4"/>
</dbReference>
<dbReference type="SUPFAM" id="SSF57716">
    <property type="entry name" value="Glucocorticoid receptor-like (DNA-binding domain)"/>
    <property type="match status" value="5"/>
</dbReference>
<dbReference type="PROSITE" id="PS00478">
    <property type="entry name" value="LIM_DOMAIN_1"/>
    <property type="match status" value="4"/>
</dbReference>
<dbReference type="PROSITE" id="PS50023">
    <property type="entry name" value="LIM_DOMAIN_2"/>
    <property type="match status" value="4"/>
</dbReference>
<comment type="function">
    <text evidence="1">May have an involvement in muscle development or hypertrophy. Isoform 2 binds to RBP-J and plays a negative regulatory role in the RBP-J-mediated transcription in mammalian systems (By similarity).</text>
</comment>
<comment type="subcellular location">
    <subcellularLocation>
        <location evidence="1">Cytoplasm</location>
    </subcellularLocation>
</comment>
<name>FHL1_RAT</name>
<protein>
    <recommendedName>
        <fullName>Four and a half LIM domains protein 1</fullName>
        <shortName>FHL-1</shortName>
    </recommendedName>
</protein>
<sequence>MSEKFDCHYCRDPLQGKKYVQKDGRHCCLKCFDKFCANTCVECRKPISADAKEVHYKNRYWHDTCFRCAKCLHPLASETFVSKDGKILCNKCATREDSPRCKGCFKAIVAGDQNVEYKGTIWHKDCFTCSNCKQVIGTGSFFPKGEDFYCVTCHETKFAKHCVKCNKAITSGGITYQDQPWHAECFVCVTCSKKLAGQRFTAVEDQYYCVDCYKNFVAKKCAGCKNPITGFGKGSSVVAYEGQSWHDYCFHCKKCSVNLANKRFVFHNEQVYCPDCAKKL</sequence>
<keyword id="KW-0007">Acetylation</keyword>
<keyword id="KW-0963">Cytoplasm</keyword>
<keyword id="KW-0217">Developmental protein</keyword>
<keyword id="KW-0221">Differentiation</keyword>
<keyword id="KW-1017">Isopeptide bond</keyword>
<keyword id="KW-0440">LIM domain</keyword>
<keyword id="KW-0479">Metal-binding</keyword>
<keyword id="KW-1185">Reference proteome</keyword>
<keyword id="KW-0677">Repeat</keyword>
<keyword id="KW-0832">Ubl conjugation</keyword>
<keyword id="KW-0862">Zinc</keyword>
<keyword id="KW-0863">Zinc-finger</keyword>
<reference key="1">
    <citation type="submission" date="1999-03" db="EMBL/GenBank/DDBJ databases">
        <title>Rat FHL1 protein sequence is very similar to its mouse and human counterparts.</title>
        <authorList>
            <person name="Morgan M.J."/>
        </authorList>
    </citation>
    <scope>NUCLEOTIDE SEQUENCE [MRNA]</scope>
</reference>
<accession>Q9WUH4</accession>
<feature type="initiator methionine" description="Removed" evidence="2">
    <location>
        <position position="1"/>
    </location>
</feature>
<feature type="chain" id="PRO_0000234933" description="Four and a half LIM domains protein 1">
    <location>
        <begin position="2"/>
        <end position="280"/>
    </location>
</feature>
<feature type="domain" description="LIM zinc-binding 1" evidence="5">
    <location>
        <begin position="40"/>
        <end position="92"/>
    </location>
</feature>
<feature type="domain" description="LIM zinc-binding 2" evidence="5">
    <location>
        <begin position="101"/>
        <end position="153"/>
    </location>
</feature>
<feature type="domain" description="LIM zinc-binding 3" evidence="5">
    <location>
        <begin position="162"/>
        <end position="212"/>
    </location>
</feature>
<feature type="domain" description="LIM zinc-binding 4" evidence="5">
    <location>
        <begin position="221"/>
        <end position="276"/>
    </location>
</feature>
<feature type="zinc finger region" description="C4-type" evidence="4">
    <location>
        <begin position="7"/>
        <end position="31"/>
    </location>
</feature>
<feature type="modified residue" description="N-acetylserine" evidence="2">
    <location>
        <position position="2"/>
    </location>
</feature>
<feature type="modified residue" description="N6-acetyllysine" evidence="2">
    <location>
        <position position="4"/>
    </location>
</feature>
<feature type="cross-link" description="Glycyl lysine isopeptide (Lys-Gly) (interchain with G-Cter in SUMO2)" evidence="3">
    <location>
        <position position="86"/>
    </location>
</feature>